<dbReference type="EMBL" id="BC104322">
    <property type="status" value="NOT_ANNOTATED_CDS"/>
    <property type="molecule type" value="mRNA"/>
</dbReference>
<dbReference type="EMBL" id="BC104323">
    <property type="status" value="NOT_ANNOTATED_CDS"/>
    <property type="molecule type" value="mRNA"/>
</dbReference>
<dbReference type="EMBL" id="X68881">
    <property type="protein sequence ID" value="CAA48752.1"/>
    <property type="molecule type" value="mRNA"/>
</dbReference>
<dbReference type="PIR" id="S29085">
    <property type="entry name" value="S29085"/>
</dbReference>
<dbReference type="RefSeq" id="NP_034261.1">
    <property type="nucleotide sequence ID" value="NM_010131.2"/>
</dbReference>
<dbReference type="SMR" id="Q04742"/>
<dbReference type="BioGRID" id="199442">
    <property type="interactions" value="17"/>
</dbReference>
<dbReference type="CORUM" id="Q04742"/>
<dbReference type="FunCoup" id="Q04742">
    <property type="interactions" value="840"/>
</dbReference>
<dbReference type="IntAct" id="Q04742">
    <property type="interactions" value="15"/>
</dbReference>
<dbReference type="STRING" id="10090.ENSMUSP00000046026"/>
<dbReference type="PaxDb" id="10090-ENSMUSP00000046026"/>
<dbReference type="PeptideAtlas" id="Q04742"/>
<dbReference type="ProteomicsDB" id="275615"/>
<dbReference type="Antibodypedia" id="1790">
    <property type="antibodies" value="194 antibodies from 29 providers"/>
</dbReference>
<dbReference type="DNASU" id="13796"/>
<dbReference type="Ensembl" id="ENSMUST00000045942.9">
    <property type="protein sequence ID" value="ENSMUSP00000046026.9"/>
    <property type="gene ID" value="ENSMUSG00000033726.9"/>
</dbReference>
<dbReference type="GeneID" id="13796"/>
<dbReference type="KEGG" id="mmu:13796"/>
<dbReference type="UCSC" id="uc009cpi.1">
    <property type="organism name" value="mouse"/>
</dbReference>
<dbReference type="AGR" id="MGI:95387"/>
<dbReference type="CTD" id="2016"/>
<dbReference type="MGI" id="MGI:95387">
    <property type="gene designation" value="Emx1"/>
</dbReference>
<dbReference type="VEuPathDB" id="HostDB:ENSMUSG00000033726"/>
<dbReference type="eggNOG" id="KOG0843">
    <property type="taxonomic scope" value="Eukaryota"/>
</dbReference>
<dbReference type="GeneTree" id="ENSGT00940000161476"/>
<dbReference type="HOGENOM" id="CLU_049668_1_0_1"/>
<dbReference type="InParanoid" id="Q04742"/>
<dbReference type="OMA" id="SPHPFFG"/>
<dbReference type="OrthoDB" id="6159439at2759"/>
<dbReference type="PhylomeDB" id="Q04742"/>
<dbReference type="TreeFam" id="TF317015"/>
<dbReference type="BioGRID-ORCS" id="13796">
    <property type="hits" value="1 hit in 78 CRISPR screens"/>
</dbReference>
<dbReference type="PRO" id="PR:Q04742"/>
<dbReference type="Proteomes" id="UP000000589">
    <property type="component" value="Chromosome 6"/>
</dbReference>
<dbReference type="RNAct" id="Q04742">
    <property type="molecule type" value="protein"/>
</dbReference>
<dbReference type="Bgee" id="ENSMUSG00000033726">
    <property type="expression patterns" value="Expressed in cerebral cortex ventricular layer and 68 other cell types or tissues"/>
</dbReference>
<dbReference type="GO" id="GO:0005694">
    <property type="term" value="C:chromosome"/>
    <property type="evidence" value="ECO:0007669"/>
    <property type="project" value="Ensembl"/>
</dbReference>
<dbReference type="GO" id="GO:0005730">
    <property type="term" value="C:nucleolus"/>
    <property type="evidence" value="ECO:0007669"/>
    <property type="project" value="Ensembl"/>
</dbReference>
<dbReference type="GO" id="GO:0005634">
    <property type="term" value="C:nucleus"/>
    <property type="evidence" value="ECO:0000314"/>
    <property type="project" value="UniProtKB"/>
</dbReference>
<dbReference type="GO" id="GO:0000981">
    <property type="term" value="F:DNA-binding transcription factor activity, RNA polymerase II-specific"/>
    <property type="evidence" value="ECO:0007669"/>
    <property type="project" value="InterPro"/>
</dbReference>
<dbReference type="GO" id="GO:1990837">
    <property type="term" value="F:sequence-specific double-stranded DNA binding"/>
    <property type="evidence" value="ECO:0007669"/>
    <property type="project" value="Ensembl"/>
</dbReference>
<dbReference type="GO" id="GO:0007420">
    <property type="term" value="P:brain development"/>
    <property type="evidence" value="ECO:0000315"/>
    <property type="project" value="MGI"/>
</dbReference>
<dbReference type="GO" id="GO:0048854">
    <property type="term" value="P:brain morphogenesis"/>
    <property type="evidence" value="ECO:0000316"/>
    <property type="project" value="MGI"/>
</dbReference>
<dbReference type="GO" id="GO:0021987">
    <property type="term" value="P:cerebral cortex development"/>
    <property type="evidence" value="ECO:0000315"/>
    <property type="project" value="MGI"/>
</dbReference>
<dbReference type="GO" id="GO:0021895">
    <property type="term" value="P:cerebral cortex neuron differentiation"/>
    <property type="evidence" value="ECO:0000316"/>
    <property type="project" value="MGI"/>
</dbReference>
<dbReference type="GO" id="GO:0021796">
    <property type="term" value="P:cerebral cortex regionalization"/>
    <property type="evidence" value="ECO:0000316"/>
    <property type="project" value="MGI"/>
</dbReference>
<dbReference type="GO" id="GO:0048872">
    <property type="term" value="P:homeostasis of number of cells"/>
    <property type="evidence" value="ECO:0000316"/>
    <property type="project" value="MGI"/>
</dbReference>
<dbReference type="GO" id="GO:0001701">
    <property type="term" value="P:in utero embryonic development"/>
    <property type="evidence" value="ECO:0000316"/>
    <property type="project" value="MGI"/>
</dbReference>
<dbReference type="GO" id="GO:0060563">
    <property type="term" value="P:neuroepithelial cell differentiation"/>
    <property type="evidence" value="ECO:0000316"/>
    <property type="project" value="MGI"/>
</dbReference>
<dbReference type="GO" id="GO:0030182">
    <property type="term" value="P:neuron differentiation"/>
    <property type="evidence" value="ECO:0000315"/>
    <property type="project" value="MGI"/>
</dbReference>
<dbReference type="GO" id="GO:1990138">
    <property type="term" value="P:neuron projection extension"/>
    <property type="evidence" value="ECO:0000316"/>
    <property type="project" value="MGI"/>
</dbReference>
<dbReference type="GO" id="GO:0009791">
    <property type="term" value="P:post-embryonic development"/>
    <property type="evidence" value="ECO:0000315"/>
    <property type="project" value="MGI"/>
</dbReference>
<dbReference type="GO" id="GO:0060019">
    <property type="term" value="P:radial glial cell differentiation"/>
    <property type="evidence" value="ECO:0000316"/>
    <property type="project" value="MGI"/>
</dbReference>
<dbReference type="GO" id="GO:0070445">
    <property type="term" value="P:regulation of oligodendrocyte progenitor proliferation"/>
    <property type="evidence" value="ECO:0000316"/>
    <property type="project" value="MGI"/>
</dbReference>
<dbReference type="GO" id="GO:0009410">
    <property type="term" value="P:response to xenobiotic stimulus"/>
    <property type="evidence" value="ECO:0000314"/>
    <property type="project" value="MGI"/>
</dbReference>
<dbReference type="GO" id="GO:0021537">
    <property type="term" value="P:telencephalon development"/>
    <property type="evidence" value="ECO:0000316"/>
    <property type="project" value="MGI"/>
</dbReference>
<dbReference type="CDD" id="cd00086">
    <property type="entry name" value="homeodomain"/>
    <property type="match status" value="1"/>
</dbReference>
<dbReference type="FunFam" id="1.10.10.60:FF:000299">
    <property type="entry name" value="Empty spiracles homeobox 3"/>
    <property type="match status" value="1"/>
</dbReference>
<dbReference type="Gene3D" id="1.10.10.60">
    <property type="entry name" value="Homeodomain-like"/>
    <property type="match status" value="1"/>
</dbReference>
<dbReference type="InterPro" id="IPR050877">
    <property type="entry name" value="EMX-VAX-Noto_Homeobox_TFs"/>
</dbReference>
<dbReference type="InterPro" id="IPR001356">
    <property type="entry name" value="HD"/>
</dbReference>
<dbReference type="InterPro" id="IPR020479">
    <property type="entry name" value="HD_metazoa"/>
</dbReference>
<dbReference type="InterPro" id="IPR017970">
    <property type="entry name" value="Homeobox_CS"/>
</dbReference>
<dbReference type="InterPro" id="IPR009057">
    <property type="entry name" value="Homeodomain-like_sf"/>
</dbReference>
<dbReference type="PANTHER" id="PTHR24339">
    <property type="entry name" value="HOMEOBOX PROTEIN EMX-RELATED"/>
    <property type="match status" value="1"/>
</dbReference>
<dbReference type="PANTHER" id="PTHR24339:SF26">
    <property type="entry name" value="HOMEOBOX PROTEIN EMX1"/>
    <property type="match status" value="1"/>
</dbReference>
<dbReference type="Pfam" id="PF00046">
    <property type="entry name" value="Homeodomain"/>
    <property type="match status" value="1"/>
</dbReference>
<dbReference type="PRINTS" id="PR00024">
    <property type="entry name" value="HOMEOBOX"/>
</dbReference>
<dbReference type="SMART" id="SM00389">
    <property type="entry name" value="HOX"/>
    <property type="match status" value="1"/>
</dbReference>
<dbReference type="SUPFAM" id="SSF46689">
    <property type="entry name" value="Homeodomain-like"/>
    <property type="match status" value="1"/>
</dbReference>
<dbReference type="PROSITE" id="PS00027">
    <property type="entry name" value="HOMEOBOX_1"/>
    <property type="match status" value="1"/>
</dbReference>
<dbReference type="PROSITE" id="PS50071">
    <property type="entry name" value="HOMEOBOX_2"/>
    <property type="match status" value="1"/>
</dbReference>
<name>EMX1_MOUSE</name>
<proteinExistence type="evidence at protein level"/>
<sequence length="257" mass="28173">MFQPAAKRGFTIESLVAKDGGTGGSPGSGGAGSHPLAVAASEEPLRPTALNYPHPSAAETAFVSGFPAAAAAGAGRSLYGGPELVFPEAMNHPALTVHPAHQLGSSSLQPPHSFFSAQHRDPLHFYPWVLRNRFFGHRFQASDVPQDGLLLHGPFARKPKRIRTAFSPSQLLRLERAFEKNHYVVGAERKQLAGSLSLSETQVKVWFQNRRTKYKRQKLEEEGPESEQKKKGSHHINRWRIATKQANGEDIDVTSND</sequence>
<accession>Q04742</accession>
<accession>Q3SXG0</accession>
<evidence type="ECO:0000255" key="1">
    <source>
        <dbReference type="PROSITE-ProRule" id="PRU00108"/>
    </source>
</evidence>
<evidence type="ECO:0000256" key="2">
    <source>
        <dbReference type="SAM" id="MobiDB-lite"/>
    </source>
</evidence>
<evidence type="ECO:0000269" key="3">
    <source>
    </source>
</evidence>
<evidence type="ECO:0000269" key="4">
    <source>
    </source>
</evidence>
<evidence type="ECO:0000269" key="5">
    <source>
    </source>
</evidence>
<evidence type="ECO:0000269" key="6">
    <source>
    </source>
</evidence>
<evidence type="ECO:0000305" key="7"/>
<feature type="chain" id="PRO_0000048867" description="Homeobox protein EMX1">
    <location>
        <begin position="1"/>
        <end position="257"/>
    </location>
</feature>
<feature type="DNA-binding region" description="Homeobox" evidence="1">
    <location>
        <begin position="159"/>
        <end position="218"/>
    </location>
</feature>
<feature type="region of interest" description="Disordered" evidence="2">
    <location>
        <begin position="216"/>
        <end position="257"/>
    </location>
</feature>
<feature type="compositionally biased region" description="Basic and acidic residues" evidence="2">
    <location>
        <begin position="217"/>
        <end position="230"/>
    </location>
</feature>
<gene>
    <name type="primary">Emx1</name>
    <name type="synonym">Emx-1</name>
</gene>
<comment type="function">
    <text evidence="3 4">Transcription factor, which in cooperation with EMX2, acts to generate the boundary between the roof and archipallium in the developing brain. May function in combinations with OTX1/2 to specify cell fates in the developing central nervous system.</text>
</comment>
<comment type="subunit">
    <text evidence="6">Interacts with WRD11 (via the N-terminal and the central portion of the protein); the interaction associates EMX1 with GLI3.</text>
</comment>
<comment type="subcellular location">
    <subcellularLocation>
        <location evidence="6">Nucleus</location>
    </subcellularLocation>
</comment>
<comment type="tissue specificity">
    <text evidence="3 5">Cerebral cortex. Expressed in the olfactory bulbs.</text>
</comment>
<comment type="developmental stage">
    <text evidence="5">Detectable from 9.5 dpc.</text>
</comment>
<comment type="similarity">
    <text evidence="7">Belongs to the EMX homeobox family.</text>
</comment>
<organism>
    <name type="scientific">Mus musculus</name>
    <name type="common">Mouse</name>
    <dbReference type="NCBI Taxonomy" id="10090"/>
    <lineage>
        <taxon>Eukaryota</taxon>
        <taxon>Metazoa</taxon>
        <taxon>Chordata</taxon>
        <taxon>Craniata</taxon>
        <taxon>Vertebrata</taxon>
        <taxon>Euteleostomi</taxon>
        <taxon>Mammalia</taxon>
        <taxon>Eutheria</taxon>
        <taxon>Euarchontoglires</taxon>
        <taxon>Glires</taxon>
        <taxon>Rodentia</taxon>
        <taxon>Myomorpha</taxon>
        <taxon>Muroidea</taxon>
        <taxon>Muridae</taxon>
        <taxon>Murinae</taxon>
        <taxon>Mus</taxon>
        <taxon>Mus</taxon>
    </lineage>
</organism>
<keyword id="KW-0217">Developmental protein</keyword>
<keyword id="KW-0238">DNA-binding</keyword>
<keyword id="KW-0371">Homeobox</keyword>
<keyword id="KW-0539">Nucleus</keyword>
<keyword id="KW-1185">Reference proteome</keyword>
<reference key="1">
    <citation type="journal article" date="2004" name="Genome Res.">
        <title>The status, quality, and expansion of the NIH full-length cDNA project: the Mammalian Gene Collection (MGC).</title>
        <authorList>
            <consortium name="The MGC Project Team"/>
        </authorList>
    </citation>
    <scope>NUCLEOTIDE SEQUENCE [LARGE SCALE MRNA]</scope>
</reference>
<reference key="2">
    <citation type="journal article" date="1992" name="EMBO J.">
        <title>Two vertebrate homeobox genes related to the Drosophila empty spiracles gene are expressed in the embryonic cerebral cortex.</title>
        <authorList>
            <person name="Simeone A."/>
            <person name="Gulisano M."/>
            <person name="Acampora D."/>
            <person name="Stornaiuolo A."/>
            <person name="Rambaldi M."/>
            <person name="Boncinelli E."/>
        </authorList>
    </citation>
    <scope>NUCLEOTIDE SEQUENCE [MRNA] OF 159-224</scope>
</reference>
<reference key="3">
    <citation type="journal article" date="1992" name="Nature">
        <title>Nested expression domains of four homeobox genes in developing rostral brain.</title>
        <authorList>
            <person name="Simeone A."/>
            <person name="Acampora D."/>
            <person name="Gulisano M."/>
            <person name="Stornaiuolo A."/>
            <person name="Boncinelli E."/>
        </authorList>
    </citation>
    <scope>NUCLEOTIDE SEQUENCE [MRNA] OF 159-224</scope>
    <scope>FUNCTION</scope>
    <scope>TISSUE SPECIFICITY</scope>
    <source>
        <tissue>Brain</tissue>
    </source>
</reference>
<reference key="4">
    <citation type="journal article" date="2004" name="Mech. Dev.">
        <title>Emx1 and Emx2 cooperate in initial phase of archipallium development.</title>
        <authorList>
            <person name="Shinozaki K."/>
            <person name="Yoshida M."/>
            <person name="Nakamura M."/>
            <person name="Aizawa S."/>
            <person name="Suda Y."/>
        </authorList>
    </citation>
    <scope>FUNCTION</scope>
</reference>
<reference key="5">
    <citation type="journal article" date="2010" name="Am. J. Hum. Genet.">
        <title>WDR11, a WD protein that interacts with transcription factor EMX1, is mutated in idiopathic hypogonadotropic hypogonadism and Kallmann syndrome.</title>
        <authorList>
            <person name="Kim H.G."/>
            <person name="Ahn J.W."/>
            <person name="Kurth I."/>
            <person name="Ullmann R."/>
            <person name="Kim H.T."/>
            <person name="Kulharya A."/>
            <person name="Ha K.S."/>
            <person name="Itokawa Y."/>
            <person name="Meliciani I."/>
            <person name="Wenzel W."/>
            <person name="Lee D."/>
            <person name="Rosenberger G."/>
            <person name="Ozata M."/>
            <person name="Bick D.P."/>
            <person name="Sherins R.J."/>
            <person name="Nagase T."/>
            <person name="Tekin M."/>
            <person name="Kim S.H."/>
            <person name="Kim C.H."/>
            <person name="Ropers H.H."/>
            <person name="Gusella J.F."/>
            <person name="Kalscheuer V."/>
            <person name="Choi C.Y."/>
            <person name="Layman L.C."/>
        </authorList>
    </citation>
    <scope>TISSUE SPECIFICITY</scope>
    <scope>DEVELOPMENTAL STAGE</scope>
</reference>
<reference key="6">
    <citation type="journal article" date="2018" name="EMBO Rep.">
        <title>WDR11-mediated Hedgehog signalling defects underlie a new ciliopathy related to Kallmann syndrome.</title>
        <authorList>
            <person name="Kim Y.J."/>
            <person name="Osborn D.P."/>
            <person name="Lee J.Y."/>
            <person name="Araki M."/>
            <person name="Araki K."/>
            <person name="Mohun T."/>
            <person name="Kaensaekoski J."/>
            <person name="Brandstack N."/>
            <person name="Kim H.T."/>
            <person name="Miralles F."/>
            <person name="Kim C.H."/>
            <person name="Brown N.A."/>
            <person name="Kim H.G."/>
            <person name="Martinez-Barbera J.P."/>
            <person name="Ataliotis P."/>
            <person name="Raivio T."/>
            <person name="Layman L.C."/>
            <person name="Kim S.H."/>
        </authorList>
    </citation>
    <scope>SUBCELLULAR LOCATION</scope>
    <scope>INTERACTION WITH WDR11</scope>
</reference>
<protein>
    <recommendedName>
        <fullName>Homeobox protein EMX1</fullName>
    </recommendedName>
    <alternativeName>
        <fullName>Empty spiracles homolog 1</fullName>
    </alternativeName>
    <alternativeName>
        <fullName>Empty spiracles-like protein 1</fullName>
    </alternativeName>
</protein>